<evidence type="ECO:0000250" key="1">
    <source>
        <dbReference type="UniProtKB" id="Q6TCG8"/>
    </source>
</evidence>
<evidence type="ECO:0000255" key="2"/>
<evidence type="ECO:0000269" key="3">
    <source>
    </source>
</evidence>
<evidence type="ECO:0000269" key="4">
    <source>
    </source>
</evidence>
<evidence type="ECO:0000269" key="5">
    <source>
    </source>
</evidence>
<evidence type="ECO:0000303" key="6">
    <source>
    </source>
</evidence>
<evidence type="ECO:0000303" key="7">
    <source>
    </source>
</evidence>
<evidence type="ECO:0000303" key="8">
    <source>
    </source>
</evidence>
<evidence type="ECO:0000305" key="9"/>
<evidence type="ECO:0000312" key="10">
    <source>
        <dbReference type="HGNC" id="HGNC:30130"/>
    </source>
</evidence>
<comment type="function">
    <text evidence="1 4 5">Golgi-scaffold protein which modulates its interactors acitivies by anchoring them to the Golgi apparatus (PubMed:18547165, PubMed:26311497). Functions as a spatial regulator of RAF1 kinase by sequestrating it to the Golgi apparatus (PubMed:18547165). Acts as a positive regulator of cholesterol biosynthesis by mediating the anchoring of the SCAP:SREBP complex in the Golgi apparatus, thereby promoting SCAP:SREBF2 complex formation, potentiating SREBF2 and SREBF1 processing and enhancing lipid synthesis (PubMed:26311497). Also regulates PPARA and PPARG functions by mediating their interaction with E3 ubiquitin ligases, such as STUB1 or HUWE1, leading to their polyubiquitination and proteasome-mediated degradation (By similarity).</text>
</comment>
<comment type="subunit">
    <text evidence="1 5">Interacts with SCAP and SREBF2; the interactions are direct, increase in low cholesterol conditions and tether SCAP:SREBP complex to the Golgi apparatus (PubMed:26311497). Interaction with SCAP is mutually exclusive with INSIG1 (PubMed:26311497). In hepatocytes, interacts with PPARA and HUWE1; the interactions promote PPARA poylubiquitination and HUWE1-mediated degradation (By similarity). In macrophages, interacts with PPARG and STUB1; the interactions promote PPARG poylubiquitination and STUB1-mediated degradation (By similarity).</text>
</comment>
<comment type="interaction">
    <interactant intactId="EBI-15654365">
        <id>Q6TCH7</id>
    </interactant>
    <interactant intactId="EBI-365996">
        <id>P04049</id>
        <label>RAF1</label>
    </interactant>
    <organismsDiffer>false</organismsDiffer>
    <experiments>3</experiments>
</comment>
<comment type="subcellular location">
    <subcellularLocation>
        <location evidence="4 5">Golgi apparatus membrane</location>
        <topology evidence="4">Multi-pass membrane protein</topology>
    </subcellularLocation>
</comment>
<comment type="alternative products">
    <event type="alternative splicing"/>
    <isoform>
        <id>Q6TCH7-1</id>
        <name>1</name>
        <sequence type="displayed"/>
    </isoform>
    <isoform>
        <id>Q6TCH7-2</id>
        <name>2</name>
        <sequence type="described" ref="VSP_011479"/>
    </isoform>
    <isoform>
        <id>Q6TCH7-3</id>
        <name>3</name>
        <sequence type="described" ref="VSP_011480"/>
    </isoform>
    <isoform>
        <id>Q6TCH7-4</id>
        <name>4</name>
        <sequence type="described" ref="VSP_011477 VSP_011478"/>
    </isoform>
</comment>
<comment type="tissue specificity">
    <text evidence="3">Widely expressed in a range of tissues.</text>
</comment>
<comment type="miscellaneous">
    <molecule>Isoform 4</molecule>
    <text evidence="9">May be produced at very low levels due to a premature stop codon in the mRNA, leading to nonsense-mediated mRNA decay.</text>
</comment>
<comment type="similarity">
    <text evidence="9">Belongs to the ADIPOR family.</text>
</comment>
<comment type="sequence caution" evidence="9">
    <conflict type="erroneous initiation">
        <sequence resource="EMBL-CDS" id="BAG51571"/>
    </conflict>
    <text>Truncated N-terminus.</text>
</comment>
<gene>
    <name evidence="10" type="primary">PAQR3</name>
</gene>
<proteinExistence type="evidence at protein level"/>
<reference key="1">
    <citation type="journal article" date="2005" name="J. Mol. Evol.">
        <title>PAQR proteins: a novel membrane receptor family defined by an ancient 7-transmembrane pass motif.</title>
        <authorList>
            <person name="Tang Y.T."/>
            <person name="Hu T."/>
            <person name="Arterburn M."/>
            <person name="Boyle B."/>
            <person name="Bright J.M."/>
            <person name="Emtage P.C."/>
            <person name="Funk W.D."/>
        </authorList>
    </citation>
    <scope>NUCLEOTIDE SEQUENCE [MRNA] (ISOFORM 1)</scope>
    <scope>TISSUE SPECIFICITY</scope>
</reference>
<reference key="2">
    <citation type="journal article" date="2004" name="Nat. Genet.">
        <title>Complete sequencing and characterization of 21,243 full-length human cDNAs.</title>
        <authorList>
            <person name="Ota T."/>
            <person name="Suzuki Y."/>
            <person name="Nishikawa T."/>
            <person name="Otsuki T."/>
            <person name="Sugiyama T."/>
            <person name="Irie R."/>
            <person name="Wakamatsu A."/>
            <person name="Hayashi K."/>
            <person name="Sato H."/>
            <person name="Nagai K."/>
            <person name="Kimura K."/>
            <person name="Makita H."/>
            <person name="Sekine M."/>
            <person name="Obayashi M."/>
            <person name="Nishi T."/>
            <person name="Shibahara T."/>
            <person name="Tanaka T."/>
            <person name="Ishii S."/>
            <person name="Yamamoto J."/>
            <person name="Saito K."/>
            <person name="Kawai Y."/>
            <person name="Isono Y."/>
            <person name="Nakamura Y."/>
            <person name="Nagahari K."/>
            <person name="Murakami K."/>
            <person name="Yasuda T."/>
            <person name="Iwayanagi T."/>
            <person name="Wagatsuma M."/>
            <person name="Shiratori A."/>
            <person name="Sudo H."/>
            <person name="Hosoiri T."/>
            <person name="Kaku Y."/>
            <person name="Kodaira H."/>
            <person name="Kondo H."/>
            <person name="Sugawara M."/>
            <person name="Takahashi M."/>
            <person name="Kanda K."/>
            <person name="Yokoi T."/>
            <person name="Furuya T."/>
            <person name="Kikkawa E."/>
            <person name="Omura Y."/>
            <person name="Abe K."/>
            <person name="Kamihara K."/>
            <person name="Katsuta N."/>
            <person name="Sato K."/>
            <person name="Tanikawa M."/>
            <person name="Yamazaki M."/>
            <person name="Ninomiya K."/>
            <person name="Ishibashi T."/>
            <person name="Yamashita H."/>
            <person name="Murakawa K."/>
            <person name="Fujimori K."/>
            <person name="Tanai H."/>
            <person name="Kimata M."/>
            <person name="Watanabe M."/>
            <person name="Hiraoka S."/>
            <person name="Chiba Y."/>
            <person name="Ishida S."/>
            <person name="Ono Y."/>
            <person name="Takiguchi S."/>
            <person name="Watanabe S."/>
            <person name="Yosida M."/>
            <person name="Hotuta T."/>
            <person name="Kusano J."/>
            <person name="Kanehori K."/>
            <person name="Takahashi-Fujii A."/>
            <person name="Hara H."/>
            <person name="Tanase T.-O."/>
            <person name="Nomura Y."/>
            <person name="Togiya S."/>
            <person name="Komai F."/>
            <person name="Hara R."/>
            <person name="Takeuchi K."/>
            <person name="Arita M."/>
            <person name="Imose N."/>
            <person name="Musashino K."/>
            <person name="Yuuki H."/>
            <person name="Oshima A."/>
            <person name="Sasaki N."/>
            <person name="Aotsuka S."/>
            <person name="Yoshikawa Y."/>
            <person name="Matsunawa H."/>
            <person name="Ichihara T."/>
            <person name="Shiohata N."/>
            <person name="Sano S."/>
            <person name="Moriya S."/>
            <person name="Momiyama H."/>
            <person name="Satoh N."/>
            <person name="Takami S."/>
            <person name="Terashima Y."/>
            <person name="Suzuki O."/>
            <person name="Nakagawa S."/>
            <person name="Senoh A."/>
            <person name="Mizoguchi H."/>
            <person name="Goto Y."/>
            <person name="Shimizu F."/>
            <person name="Wakebe H."/>
            <person name="Hishigaki H."/>
            <person name="Watanabe T."/>
            <person name="Sugiyama A."/>
            <person name="Takemoto M."/>
            <person name="Kawakami B."/>
            <person name="Yamazaki M."/>
            <person name="Watanabe K."/>
            <person name="Kumagai A."/>
            <person name="Itakura S."/>
            <person name="Fukuzumi Y."/>
            <person name="Fujimori Y."/>
            <person name="Komiyama M."/>
            <person name="Tashiro H."/>
            <person name="Tanigami A."/>
            <person name="Fujiwara T."/>
            <person name="Ono T."/>
            <person name="Yamada K."/>
            <person name="Fujii Y."/>
            <person name="Ozaki K."/>
            <person name="Hirao M."/>
            <person name="Ohmori Y."/>
            <person name="Kawabata A."/>
            <person name="Hikiji T."/>
            <person name="Kobatake N."/>
            <person name="Inagaki H."/>
            <person name="Ikema Y."/>
            <person name="Okamoto S."/>
            <person name="Okitani R."/>
            <person name="Kawakami T."/>
            <person name="Noguchi S."/>
            <person name="Itoh T."/>
            <person name="Shigeta K."/>
            <person name="Senba T."/>
            <person name="Matsumura K."/>
            <person name="Nakajima Y."/>
            <person name="Mizuno T."/>
            <person name="Morinaga M."/>
            <person name="Sasaki M."/>
            <person name="Togashi T."/>
            <person name="Oyama M."/>
            <person name="Hata H."/>
            <person name="Watanabe M."/>
            <person name="Komatsu T."/>
            <person name="Mizushima-Sugano J."/>
            <person name="Satoh T."/>
            <person name="Shirai Y."/>
            <person name="Takahashi Y."/>
            <person name="Nakagawa K."/>
            <person name="Okumura K."/>
            <person name="Nagase T."/>
            <person name="Nomura N."/>
            <person name="Kikuchi H."/>
            <person name="Masuho Y."/>
            <person name="Yamashita R."/>
            <person name="Nakai K."/>
            <person name="Yada T."/>
            <person name="Nakamura Y."/>
            <person name="Ohara O."/>
            <person name="Isogai T."/>
            <person name="Sugano S."/>
        </authorList>
    </citation>
    <scope>NUCLEOTIDE SEQUENCE [LARGE SCALE MRNA] (ISOFORM 1)</scope>
    <source>
        <tissue>Kidney</tissue>
        <tissue>Teratocarcinoma</tissue>
    </source>
</reference>
<reference key="3">
    <citation type="journal article" date="2004" name="Genome Res.">
        <title>The status, quality, and expansion of the NIH full-length cDNA project: the Mammalian Gene Collection (MGC).</title>
        <authorList>
            <consortium name="The MGC Project Team"/>
        </authorList>
    </citation>
    <scope>NUCLEOTIDE SEQUENCE [LARGE SCALE MRNA] (ISOFORMS 2; 3 AND 4)</scope>
    <source>
        <tissue>Testis</tissue>
    </source>
</reference>
<reference key="4">
    <citation type="journal article" date="2008" name="Biochem. J.">
        <title>Characterization of the topology and functional domains of RKTG.</title>
        <authorList>
            <person name="Luo X."/>
            <person name="Feng L."/>
            <person name="Jiang X."/>
            <person name="Xiao F."/>
            <person name="Wang Z."/>
            <person name="Feng G.S."/>
            <person name="Chen Y."/>
        </authorList>
    </citation>
    <scope>FUNCTION</scope>
    <scope>SUBCELLULAR LOCATION</scope>
    <scope>TOPOLOGY</scope>
</reference>
<reference key="5">
    <citation type="journal article" date="2015" name="Nat. Commun.">
        <title>PAQR3 modulates cholesterol homeostasis by anchoring Scap/SREBP complex to the Golgi apparatus.</title>
        <authorList>
            <person name="Xu D."/>
            <person name="Wang Z."/>
            <person name="Zhang Y."/>
            <person name="Jiang W."/>
            <person name="Pan Y."/>
            <person name="Song B.L."/>
            <person name="Chen Y."/>
        </authorList>
    </citation>
    <scope>FUNCTION</scope>
    <scope>INTERACTION WITH SCAP AND SREBF2</scope>
    <scope>SUBCELLULAR LOCATION</scope>
    <scope>REGION</scope>
</reference>
<sequence>MHQKLLKSAHYIELGSYQYWPVLVPRGIRLYTYEQIPGSLKDNPYITDGYRAYLPSRLCIKSLFILSNETVNIWSHLLGFFLFFTLGIYDMTSVLPSASASREDFVICSICLFCFQVCMLCSVGYHLFSCHRSEKTCRRWMALDYAGISIGILGCYVSGVFYAFYCNNYWRQVYLITVLAMILAVFFAQIHPNYLTQQWQRLRSIIFCSVSGYGVIPTLHWVWLNGGIGAPIVQDFAPRVIVMYMIALLAFLFYISKVPERYFPGQLNYLGSSHQIWHILAVVMLYWWHQSTVYVMQYRHSKPCPDYVSHL</sequence>
<protein>
    <recommendedName>
        <fullName evidence="7">Progestin and adipoQ receptor family member 3</fullName>
    </recommendedName>
    <alternativeName>
        <fullName>Progestin and adipoQ receptor family member III</fullName>
    </alternativeName>
    <alternativeName>
        <fullName evidence="8">Raf kinase trapping to Golgi</fullName>
        <shortName evidence="8">RKTG</shortName>
    </alternativeName>
</protein>
<name>PAQR3_HUMAN</name>
<feature type="chain" id="PRO_0000218846" description="Progestin and adipoQ receptor family member 3">
    <location>
        <begin position="1"/>
        <end position="311"/>
    </location>
</feature>
<feature type="topological domain" description="Cytoplasmic" evidence="2">
    <location>
        <begin position="1"/>
        <end position="73"/>
    </location>
</feature>
<feature type="transmembrane region" description="Helical" evidence="2">
    <location>
        <begin position="74"/>
        <end position="96"/>
    </location>
</feature>
<feature type="topological domain" description="Lumenal" evidence="2">
    <location>
        <begin position="97"/>
        <end position="105"/>
    </location>
</feature>
<feature type="transmembrane region" description="Helical" evidence="2">
    <location>
        <begin position="106"/>
        <end position="128"/>
    </location>
</feature>
<feature type="topological domain" description="Cytoplasmic" evidence="2">
    <location>
        <begin position="129"/>
        <end position="140"/>
    </location>
</feature>
<feature type="transmembrane region" description="Helical" evidence="2">
    <location>
        <begin position="141"/>
        <end position="163"/>
    </location>
</feature>
<feature type="topological domain" description="Lumenal" evidence="2">
    <location>
        <begin position="164"/>
        <end position="172"/>
    </location>
</feature>
<feature type="transmembrane region" description="Helical" evidence="2">
    <location>
        <begin position="173"/>
        <end position="195"/>
    </location>
</feature>
<feature type="topological domain" description="Cytoplasmic" evidence="2">
    <location>
        <begin position="196"/>
        <end position="201"/>
    </location>
</feature>
<feature type="transmembrane region" description="Helical" evidence="2">
    <location>
        <begin position="202"/>
        <end position="224"/>
    </location>
</feature>
<feature type="topological domain" description="Lumenal" evidence="2">
    <location>
        <begin position="225"/>
        <end position="238"/>
    </location>
</feature>
<feature type="transmembrane region" description="Helical" evidence="2">
    <location>
        <begin position="239"/>
        <end position="256"/>
    </location>
</feature>
<feature type="topological domain" description="Cytoplasmic" evidence="2">
    <location>
        <begin position="257"/>
        <end position="275"/>
    </location>
</feature>
<feature type="transmembrane region" description="Helical" evidence="2">
    <location>
        <begin position="276"/>
        <end position="298"/>
    </location>
</feature>
<feature type="topological domain" description="Lumenal" evidence="2">
    <location>
        <begin position="299"/>
        <end position="311"/>
    </location>
</feature>
<feature type="region of interest" description="Required for interaction with SREBF2" evidence="5">
    <location>
        <begin position="1"/>
        <end position="20"/>
    </location>
</feature>
<feature type="region of interest" description="Required for interaction with SCAP" evidence="5">
    <location>
        <begin position="41"/>
        <end position="60"/>
    </location>
</feature>
<feature type="region of interest" description="Golgi targeting" evidence="4">
    <location>
        <begin position="61"/>
        <end position="71"/>
    </location>
</feature>
<feature type="region of interest" description="Golgi targeting" evidence="4">
    <location>
        <begin position="299"/>
        <end position="303"/>
    </location>
</feature>
<feature type="splice variant" id="VSP_011477" description="In isoform 4." evidence="6">
    <original>SLFILSNETVNIWSHLLGFFLFFTLGI</original>
    <variation>RSVCFALWAIIFFPAIGQKKHVEDGWH</variation>
    <location>
        <begin position="62"/>
        <end position="88"/>
    </location>
</feature>
<feature type="splice variant" id="VSP_011478" description="In isoform 4." evidence="6">
    <location>
        <begin position="89"/>
        <end position="311"/>
    </location>
</feature>
<feature type="splice variant" id="VSP_011479" description="In isoform 2." evidence="6">
    <original>GQLNYLGSSHQIWHILAVVMLYWWHQSTVYVMQYRHSKPCPDYVSHL</original>
    <variation>ENIFRWEITKRTLGGVNNSLQNLYLLV</variation>
    <location>
        <begin position="265"/>
        <end position="311"/>
    </location>
</feature>
<feature type="splice variant" id="VSP_011480" description="In isoform 3." evidence="6">
    <original>GQLNYLGSSHQIWHILAVVMLYWWHQSTVYVMQYRHSKPCPDYVSHL</original>
    <variation>ESLPR</variation>
    <location>
        <begin position="265"/>
        <end position="311"/>
    </location>
</feature>
<feature type="sequence conflict" description="In Ref. 2; BAF83921." evidence="9" ref="2">
    <original>L</original>
    <variation>Q</variation>
    <location>
        <position position="30"/>
    </location>
</feature>
<feature type="sequence conflict" description="In Ref. 1; AAR08369." evidence="9" ref="1">
    <original>V</original>
    <variation>A</variation>
    <location>
        <position position="258"/>
    </location>
</feature>
<organism>
    <name type="scientific">Homo sapiens</name>
    <name type="common">Human</name>
    <dbReference type="NCBI Taxonomy" id="9606"/>
    <lineage>
        <taxon>Eukaryota</taxon>
        <taxon>Metazoa</taxon>
        <taxon>Chordata</taxon>
        <taxon>Craniata</taxon>
        <taxon>Vertebrata</taxon>
        <taxon>Euteleostomi</taxon>
        <taxon>Mammalia</taxon>
        <taxon>Eutheria</taxon>
        <taxon>Euarchontoglires</taxon>
        <taxon>Primates</taxon>
        <taxon>Haplorrhini</taxon>
        <taxon>Catarrhini</taxon>
        <taxon>Hominidae</taxon>
        <taxon>Homo</taxon>
    </lineage>
</organism>
<accession>Q6TCH7</accession>
<accession>A8K5B7</accession>
<accession>B3KP59</accession>
<accession>Q6PIQ1</accession>
<accession>Q86X05</accession>
<accession>Q8NCP9</accession>
<keyword id="KW-0025">Alternative splicing</keyword>
<keyword id="KW-0333">Golgi apparatus</keyword>
<keyword id="KW-0472">Membrane</keyword>
<keyword id="KW-1267">Proteomics identification</keyword>
<keyword id="KW-1185">Reference proteome</keyword>
<keyword id="KW-0812">Transmembrane</keyword>
<keyword id="KW-1133">Transmembrane helix</keyword>
<dbReference type="EMBL" id="AY424281">
    <property type="protein sequence ID" value="AAR08369.1"/>
    <property type="molecule type" value="mRNA"/>
</dbReference>
<dbReference type="EMBL" id="AK055774">
    <property type="protein sequence ID" value="BAG51571.1"/>
    <property type="status" value="ALT_INIT"/>
    <property type="molecule type" value="mRNA"/>
</dbReference>
<dbReference type="EMBL" id="AK291232">
    <property type="protein sequence ID" value="BAF83921.1"/>
    <property type="molecule type" value="mRNA"/>
</dbReference>
<dbReference type="EMBL" id="BC029604">
    <property type="status" value="NOT_ANNOTATED_CDS"/>
    <property type="molecule type" value="mRNA"/>
</dbReference>
<dbReference type="EMBL" id="BC031256">
    <property type="protein sequence ID" value="AAH31256.1"/>
    <property type="molecule type" value="mRNA"/>
</dbReference>
<dbReference type="EMBL" id="BC047510">
    <property type="protein sequence ID" value="AAH47510.1"/>
    <property type="molecule type" value="mRNA"/>
</dbReference>
<dbReference type="CCDS" id="CCDS34020.1">
    <molecule id="Q6TCH7-1"/>
</dbReference>
<dbReference type="RefSeq" id="NP_001035292.1">
    <molecule id="Q6TCH7-1"/>
    <property type="nucleotide sequence ID" value="NM_001040202.2"/>
</dbReference>
<dbReference type="RefSeq" id="XP_047305599.1">
    <molecule id="Q6TCH7-1"/>
    <property type="nucleotide sequence ID" value="XM_047449643.1"/>
</dbReference>
<dbReference type="RefSeq" id="XP_054204965.1">
    <molecule id="Q6TCH7-1"/>
    <property type="nucleotide sequence ID" value="XM_054348990.1"/>
</dbReference>
<dbReference type="SMR" id="Q6TCH7"/>
<dbReference type="BioGRID" id="127451">
    <property type="interactions" value="28"/>
</dbReference>
<dbReference type="CORUM" id="Q6TCH7"/>
<dbReference type="DIP" id="DIP-46464N"/>
<dbReference type="FunCoup" id="Q6TCH7">
    <property type="interactions" value="809"/>
</dbReference>
<dbReference type="IntAct" id="Q6TCH7">
    <property type="interactions" value="13"/>
</dbReference>
<dbReference type="STRING" id="9606.ENSP00000421981"/>
<dbReference type="iPTMnet" id="Q6TCH7"/>
<dbReference type="PhosphoSitePlus" id="Q6TCH7"/>
<dbReference type="BioMuta" id="PAQR3"/>
<dbReference type="DMDM" id="51701774"/>
<dbReference type="jPOST" id="Q6TCH7"/>
<dbReference type="MassIVE" id="Q6TCH7"/>
<dbReference type="PaxDb" id="9606-ENSP00000421981"/>
<dbReference type="PeptideAtlas" id="Q6TCH7"/>
<dbReference type="ProteomicsDB" id="67380">
    <molecule id="Q6TCH7-1"/>
</dbReference>
<dbReference type="ProteomicsDB" id="67381">
    <molecule id="Q6TCH7-2"/>
</dbReference>
<dbReference type="ProteomicsDB" id="67382">
    <molecule id="Q6TCH7-3"/>
</dbReference>
<dbReference type="ProteomicsDB" id="67383">
    <molecule id="Q6TCH7-4"/>
</dbReference>
<dbReference type="Antibodypedia" id="55228">
    <property type="antibodies" value="52 antibodies from 10 providers"/>
</dbReference>
<dbReference type="DNASU" id="152559"/>
<dbReference type="Ensembl" id="ENST00000395594.2">
    <molecule id="Q6TCH7-3"/>
    <property type="protein sequence ID" value="ENSP00000378959.2"/>
    <property type="gene ID" value="ENSG00000163291.14"/>
</dbReference>
<dbReference type="Ensembl" id="ENST00000511594.5">
    <molecule id="Q6TCH7-1"/>
    <property type="protein sequence ID" value="ENSP00000425080.1"/>
    <property type="gene ID" value="ENSG00000163291.14"/>
</dbReference>
<dbReference type="Ensembl" id="ENST00000512733.5">
    <molecule id="Q6TCH7-1"/>
    <property type="protein sequence ID" value="ENSP00000421981.1"/>
    <property type="gene ID" value="ENSG00000163291.14"/>
</dbReference>
<dbReference type="Ensembl" id="ENST00000512760.5">
    <molecule id="Q6TCH7-4"/>
    <property type="protein sequence ID" value="ENSP00000426875.1"/>
    <property type="gene ID" value="ENSG00000163291.14"/>
</dbReference>
<dbReference type="Ensembl" id="ENST00000515853.5">
    <molecule id="Q6TCH7-4"/>
    <property type="protein sequence ID" value="ENSP00000422357.1"/>
    <property type="gene ID" value="ENSG00000163291.14"/>
</dbReference>
<dbReference type="GeneID" id="152559"/>
<dbReference type="KEGG" id="hsa:152559"/>
<dbReference type="MANE-Select" id="ENST00000512733.5">
    <property type="protein sequence ID" value="ENSP00000421981.1"/>
    <property type="RefSeq nucleotide sequence ID" value="NM_001040202.2"/>
    <property type="RefSeq protein sequence ID" value="NP_001035292.1"/>
</dbReference>
<dbReference type="UCSC" id="uc003hlp.2">
    <molecule id="Q6TCH7-1"/>
    <property type="organism name" value="human"/>
</dbReference>
<dbReference type="AGR" id="HGNC:30130"/>
<dbReference type="CTD" id="152559"/>
<dbReference type="DisGeNET" id="152559"/>
<dbReference type="GeneCards" id="PAQR3"/>
<dbReference type="HGNC" id="HGNC:30130">
    <property type="gene designation" value="PAQR3"/>
</dbReference>
<dbReference type="HPA" id="ENSG00000163291">
    <property type="expression patterns" value="Tissue enhanced (brain)"/>
</dbReference>
<dbReference type="MIM" id="614577">
    <property type="type" value="gene"/>
</dbReference>
<dbReference type="neXtProt" id="NX_Q6TCH7"/>
<dbReference type="OpenTargets" id="ENSG00000163291"/>
<dbReference type="PharmGKB" id="PA134952039"/>
<dbReference type="VEuPathDB" id="HostDB:ENSG00000163291"/>
<dbReference type="eggNOG" id="KOG0748">
    <property type="taxonomic scope" value="Eukaryota"/>
</dbReference>
<dbReference type="GeneTree" id="ENSGT00940000155291"/>
<dbReference type="HOGENOM" id="CLU_190093_0_0_1"/>
<dbReference type="InParanoid" id="Q6TCH7"/>
<dbReference type="OMA" id="HSQPCPD"/>
<dbReference type="OrthoDB" id="529367at2759"/>
<dbReference type="PAN-GO" id="Q6TCH7">
    <property type="GO annotations" value="1 GO annotation based on evolutionary models"/>
</dbReference>
<dbReference type="PhylomeDB" id="Q6TCH7"/>
<dbReference type="TreeFam" id="TF313640"/>
<dbReference type="PathwayCommons" id="Q6TCH7"/>
<dbReference type="Reactome" id="R-HSA-5675221">
    <property type="pathway name" value="Negative regulation of MAPK pathway"/>
</dbReference>
<dbReference type="SignaLink" id="Q6TCH7"/>
<dbReference type="SIGNOR" id="Q6TCH7"/>
<dbReference type="BioGRID-ORCS" id="152559">
    <property type="hits" value="18 hits in 1157 CRISPR screens"/>
</dbReference>
<dbReference type="ChiTaRS" id="PAQR3">
    <property type="organism name" value="human"/>
</dbReference>
<dbReference type="GenomeRNAi" id="152559"/>
<dbReference type="Pharos" id="Q6TCH7">
    <property type="development level" value="Tbio"/>
</dbReference>
<dbReference type="PRO" id="PR:Q6TCH7"/>
<dbReference type="Proteomes" id="UP000005640">
    <property type="component" value="Chromosome 4"/>
</dbReference>
<dbReference type="RNAct" id="Q6TCH7">
    <property type="molecule type" value="protein"/>
</dbReference>
<dbReference type="Bgee" id="ENSG00000163291">
    <property type="expression patterns" value="Expressed in sperm and 185 other cell types or tissues"/>
</dbReference>
<dbReference type="ExpressionAtlas" id="Q6TCH7">
    <property type="expression patterns" value="baseline and differential"/>
</dbReference>
<dbReference type="GO" id="GO:0005794">
    <property type="term" value="C:Golgi apparatus"/>
    <property type="evidence" value="ECO:0000314"/>
    <property type="project" value="MGI"/>
</dbReference>
<dbReference type="GO" id="GO:0000139">
    <property type="term" value="C:Golgi membrane"/>
    <property type="evidence" value="ECO:0000314"/>
    <property type="project" value="UniProt"/>
</dbReference>
<dbReference type="GO" id="GO:0043495">
    <property type="term" value="F:protein-membrane adaptor activity"/>
    <property type="evidence" value="ECO:0000314"/>
    <property type="project" value="UniProt"/>
</dbReference>
<dbReference type="GO" id="GO:1990756">
    <property type="term" value="F:ubiquitin-like ligase-substrate adaptor activity"/>
    <property type="evidence" value="ECO:0000250"/>
    <property type="project" value="UniProtKB"/>
</dbReference>
<dbReference type="GO" id="GO:0043407">
    <property type="term" value="P:negative regulation of MAP kinase activity"/>
    <property type="evidence" value="ECO:0000314"/>
    <property type="project" value="MGI"/>
</dbReference>
<dbReference type="GO" id="GO:0010977">
    <property type="term" value="P:negative regulation of neuron projection development"/>
    <property type="evidence" value="ECO:0000314"/>
    <property type="project" value="MGI"/>
</dbReference>
<dbReference type="GO" id="GO:0033137">
    <property type="term" value="P:negative regulation of peptidyl-serine phosphorylation"/>
    <property type="evidence" value="ECO:0000314"/>
    <property type="project" value="MGI"/>
</dbReference>
<dbReference type="GO" id="GO:0035359">
    <property type="term" value="P:negative regulation of peroxisome proliferator activated receptor signaling pathway"/>
    <property type="evidence" value="ECO:0000250"/>
    <property type="project" value="UniProtKB"/>
</dbReference>
<dbReference type="GO" id="GO:0001933">
    <property type="term" value="P:negative regulation of protein phosphorylation"/>
    <property type="evidence" value="ECO:0000314"/>
    <property type="project" value="MGI"/>
</dbReference>
<dbReference type="GO" id="GO:0045542">
    <property type="term" value="P:positive regulation of cholesterol biosynthetic process"/>
    <property type="evidence" value="ECO:0000314"/>
    <property type="project" value="UniProt"/>
</dbReference>
<dbReference type="GO" id="GO:0032436">
    <property type="term" value="P:positive regulation of proteasomal ubiquitin-dependent protein catabolic process"/>
    <property type="evidence" value="ECO:0000250"/>
    <property type="project" value="UniProtKB"/>
</dbReference>
<dbReference type="GO" id="GO:2000640">
    <property type="term" value="P:positive regulation of SREBP signaling pathway"/>
    <property type="evidence" value="ECO:0000314"/>
    <property type="project" value="UniProt"/>
</dbReference>
<dbReference type="GO" id="GO:0034067">
    <property type="term" value="P:protein localization to Golgi apparatus"/>
    <property type="evidence" value="ECO:0000314"/>
    <property type="project" value="UniProt"/>
</dbReference>
<dbReference type="InterPro" id="IPR004254">
    <property type="entry name" value="AdipoR/HlyIII-related"/>
</dbReference>
<dbReference type="PANTHER" id="PTHR20855">
    <property type="entry name" value="ADIPOR/PROGESTIN RECEPTOR-RELATED"/>
    <property type="match status" value="1"/>
</dbReference>
<dbReference type="PANTHER" id="PTHR20855:SF15">
    <property type="entry name" value="PROGESTIN AND ADIPOQ RECEPTOR FAMILY MEMBER 3"/>
    <property type="match status" value="1"/>
</dbReference>
<dbReference type="Pfam" id="PF03006">
    <property type="entry name" value="HlyIII"/>
    <property type="match status" value="1"/>
</dbReference>